<name>PRAX_MOUSE</name>
<organism>
    <name type="scientific">Mus musculus</name>
    <name type="common">Mouse</name>
    <dbReference type="NCBI Taxonomy" id="10090"/>
    <lineage>
        <taxon>Eukaryota</taxon>
        <taxon>Metazoa</taxon>
        <taxon>Chordata</taxon>
        <taxon>Craniata</taxon>
        <taxon>Vertebrata</taxon>
        <taxon>Euteleostomi</taxon>
        <taxon>Mammalia</taxon>
        <taxon>Eutheria</taxon>
        <taxon>Euarchontoglires</taxon>
        <taxon>Glires</taxon>
        <taxon>Rodentia</taxon>
        <taxon>Myomorpha</taxon>
        <taxon>Muroidea</taxon>
        <taxon>Muridae</taxon>
        <taxon>Murinae</taxon>
        <taxon>Mus</taxon>
        <taxon>Mus</taxon>
    </lineage>
</organism>
<sequence length="1391" mass="147688">MEARSRSAEELRRAELVEIIVETEAQTGVSGFNVAGGGKEGIFVRELREDSPAAKSLSLQEGDQLLSARVFFENFKYEDALRLLQCAEPYKVSFCLKRTVPTGDLALRPGTVSGYEMKGPRAKVAKLNIQSLAPVKKKKMVTGALGTPADLAPVDVEFSFPKFSRLRRGLKAEAVKGPVPAAPARRRLQLPRLRVREVAEEAQVARMAAAAPPPRKAKAEAEAATGAGFTAPQIELVGPRLPSAEVGVPQVSVPKGTPSTEAASGFALHLPTLGLGAPAAPAVEPPATGIQVPQVELPTLPSLPTLPTLPCLDTQEGAAVVKVPTLDVAAPSMGVDLALPGAEVEAQGEVPEVALKMPRLSFPRFGIRGKEATEAKVVKGSPEAKAKGPRLRMPTFGLSLLEPRPSGPEAVAESKLKLPTLKMPSFGIGVAGPEVKAPTGPEVKLPKVPEVKLPKVPEAAIPDVQLPEVQLPKMSDMKLPKIPEMVVPDVRLPEVQLPKVPEMKVPEMKLPKWPEMAVPDVHLPDVQLPKVPEMKLPKVPEMAVPDVHLPDVQLPKVPEMKLPEMKLPKVPEMAVPDVRLPEVQLPKVSEVKLPKMPEMAVPDVHLPELQLPKMSEVKLPKMPEMAVPDVRLPEVQLPKVSEMKLPKMPEMTMPDIRLPEVQLPKVPDIKLPEMKLPEIKLPKVPDMAVPDVPLPELQLPKVSDIRLPEMQVSQVPEVQLPKMPEMKLSKVPEVQRKSAGAEQAKGTEFSFKLPKMTMPKLGKVGKPGEASIEVPDKLMTLPCLQPEVGTEASHVGVPSLSLPSVELDLPGALGLEGQVQEAVPGKVEKPEGPRVAVGVGEVGFRVPSVEIVTPQLPTVEVEKEQLEMVEMKVKPSSKFSLPKFGLSGPKAVKGEVEGPGRATKLKVSKFTISLPKARAGTEAEAKGAGEAGLLPALDLSIPQLSLDAQLPSGKVEVADSKPKSSRFALPKFGVKGRDSEADVLVAGEAELEGKGWGWDGKVKMPKLKMPSFGLSRGKEAETQDGRVSPGEKLEAIAGQLKIPAVELVTPGAQETEKVTSGVKPSGLQVSTTGQVVAEGQESVQRVSTLGISLPQVELASFGEAGPEIVAPSAEGTAGSRVQVPQVMLELPGTQVAGGDLLVGEGIFKMPTVTVPQLELDVGLGHEAQAGEAAKSEGGIKLKLPTLGTGSRGEGVEPQGPEAQRTFHLSLPDVELTSPVSSHAEYQVVEGDGDGGHKLKVRLPLFGLAKAKEGIEVGEKVKSPKLRLPRVGFSQSESVSGEGSPSPEEEEEGSGEGASSRRGRVRVRLPRVGLASPSKVSKGQEGDATSKSPVGEKSPKFRFPRVSLSPKARSGSRDREEGGFRVRLPSVGFSETAVPGSTRIEGTQAAAI</sequence>
<accession>O55103</accession>
<accession>O55104</accession>
<dbReference type="EMBL" id="AJ222968">
    <property type="protein sequence ID" value="CAA11022.1"/>
    <property type="molecule type" value="mRNA"/>
</dbReference>
<dbReference type="EMBL" id="AJ222969">
    <property type="protein sequence ID" value="CAA11023.1"/>
    <property type="molecule type" value="mRNA"/>
</dbReference>
<dbReference type="CCDS" id="CCDS21023.1">
    <molecule id="O55103-1"/>
</dbReference>
<dbReference type="CCDS" id="CCDS39849.1">
    <molecule id="O55103-2"/>
</dbReference>
<dbReference type="RefSeq" id="NP_062285.1">
    <molecule id="O55103-2"/>
    <property type="nucleotide sequence ID" value="NM_019412.3"/>
</dbReference>
<dbReference type="RefSeq" id="NP_932165.2">
    <property type="nucleotide sequence ID" value="NM_198048.2"/>
</dbReference>
<dbReference type="SMR" id="O55103"/>
<dbReference type="BioGRID" id="202408">
    <property type="interactions" value="1"/>
</dbReference>
<dbReference type="CORUM" id="O55103"/>
<dbReference type="FunCoup" id="O55103">
    <property type="interactions" value="532"/>
</dbReference>
<dbReference type="IntAct" id="O55103">
    <property type="interactions" value="1"/>
</dbReference>
<dbReference type="STRING" id="10090.ENSMUSP00000096241"/>
<dbReference type="iPTMnet" id="O55103"/>
<dbReference type="PhosphoSitePlus" id="O55103"/>
<dbReference type="jPOST" id="O55103"/>
<dbReference type="PaxDb" id="10090-ENSMUSP00000096241"/>
<dbReference type="PeptideAtlas" id="O55103"/>
<dbReference type="ProteomicsDB" id="291856">
    <molecule id="O55103-1"/>
</dbReference>
<dbReference type="ProteomicsDB" id="291857">
    <molecule id="O55103-2"/>
</dbReference>
<dbReference type="Antibodypedia" id="959">
    <property type="antibodies" value="72 antibodies from 17 providers"/>
</dbReference>
<dbReference type="DNASU" id="19153"/>
<dbReference type="Ensembl" id="ENSMUST00000108355.2">
    <molecule id="O55103-2"/>
    <property type="protein sequence ID" value="ENSMUSP00000103992.2"/>
    <property type="gene ID" value="ENSMUSG00000053198.15"/>
</dbReference>
<dbReference type="GeneID" id="19153"/>
<dbReference type="KEGG" id="mmu:19153"/>
<dbReference type="UCSC" id="uc009fwj.2">
    <molecule id="O55103-2"/>
    <property type="organism name" value="mouse"/>
</dbReference>
<dbReference type="AGR" id="MGI:108176"/>
<dbReference type="CTD" id="57716"/>
<dbReference type="MGI" id="MGI:108176">
    <property type="gene designation" value="Prx"/>
</dbReference>
<dbReference type="VEuPathDB" id="HostDB:ENSMUSG00000053198"/>
<dbReference type="eggNOG" id="ENOG502QS7Y">
    <property type="taxonomic scope" value="Eukaryota"/>
</dbReference>
<dbReference type="GeneTree" id="ENSGT00940000160366"/>
<dbReference type="HOGENOM" id="CLU_1758219_0_0_1"/>
<dbReference type="InParanoid" id="O55103"/>
<dbReference type="OrthoDB" id="89234at9989"/>
<dbReference type="PhylomeDB" id="O55103"/>
<dbReference type="BioGRID-ORCS" id="19153">
    <property type="hits" value="3 hits in 77 CRISPR screens"/>
</dbReference>
<dbReference type="ChiTaRS" id="Prx">
    <property type="organism name" value="mouse"/>
</dbReference>
<dbReference type="PRO" id="PR:O55103"/>
<dbReference type="Proteomes" id="UP000000589">
    <property type="component" value="Chromosome 7"/>
</dbReference>
<dbReference type="RNAct" id="O55103">
    <property type="molecule type" value="protein"/>
</dbReference>
<dbReference type="Bgee" id="ENSMUSG00000053198">
    <property type="expression patterns" value="Expressed in sciatic nerve and 168 other cell types or tissues"/>
</dbReference>
<dbReference type="ExpressionAtlas" id="O55103">
    <property type="expression patterns" value="baseline and differential"/>
</dbReference>
<dbReference type="GO" id="GO:0070161">
    <property type="term" value="C:anchoring junction"/>
    <property type="evidence" value="ECO:0007669"/>
    <property type="project" value="UniProtKB-SubCell"/>
</dbReference>
<dbReference type="GO" id="GO:0005737">
    <property type="term" value="C:cytoplasm"/>
    <property type="evidence" value="ECO:0000314"/>
    <property type="project" value="MGI"/>
</dbReference>
<dbReference type="GO" id="GO:0005829">
    <property type="term" value="C:cytosol"/>
    <property type="evidence" value="ECO:0000314"/>
    <property type="project" value="UniProtKB"/>
</dbReference>
<dbReference type="GO" id="GO:0016607">
    <property type="term" value="C:nuclear speck"/>
    <property type="evidence" value="ECO:0000314"/>
    <property type="project" value="UniProtKB"/>
</dbReference>
<dbReference type="GO" id="GO:0005634">
    <property type="term" value="C:nucleus"/>
    <property type="evidence" value="ECO:0000314"/>
    <property type="project" value="MGI"/>
</dbReference>
<dbReference type="GO" id="GO:0005886">
    <property type="term" value="C:plasma membrane"/>
    <property type="evidence" value="ECO:0000314"/>
    <property type="project" value="UniProtKB"/>
</dbReference>
<dbReference type="GO" id="GO:0032290">
    <property type="term" value="P:peripheral nervous system myelin formation"/>
    <property type="evidence" value="ECO:0000315"/>
    <property type="project" value="UniProtKB"/>
</dbReference>
<dbReference type="GO" id="GO:0032287">
    <property type="term" value="P:peripheral nervous system myelin maintenance"/>
    <property type="evidence" value="ECO:0000315"/>
    <property type="project" value="UniProtKB"/>
</dbReference>
<dbReference type="GO" id="GO:0043484">
    <property type="term" value="P:regulation of RNA splicing"/>
    <property type="evidence" value="ECO:0000314"/>
    <property type="project" value="UniProtKB"/>
</dbReference>
<dbReference type="GO" id="GO:0019233">
    <property type="term" value="P:sensory perception of pain"/>
    <property type="evidence" value="ECO:0000315"/>
    <property type="project" value="UniProtKB"/>
</dbReference>
<dbReference type="GO" id="GO:0019226">
    <property type="term" value="P:transmission of nerve impulse"/>
    <property type="evidence" value="ECO:0000315"/>
    <property type="project" value="UniProtKB"/>
</dbReference>
<dbReference type="CDD" id="cd00136">
    <property type="entry name" value="PDZ_canonical"/>
    <property type="match status" value="1"/>
</dbReference>
<dbReference type="FunFam" id="2.30.42.10:FF:000149">
    <property type="entry name" value="Periaxin"/>
    <property type="match status" value="1"/>
</dbReference>
<dbReference type="Gene3D" id="2.30.42.10">
    <property type="match status" value="1"/>
</dbReference>
<dbReference type="InterPro" id="IPR052082">
    <property type="entry name" value="Myelin_sheath_structural"/>
</dbReference>
<dbReference type="InterPro" id="IPR001478">
    <property type="entry name" value="PDZ"/>
</dbReference>
<dbReference type="InterPro" id="IPR036034">
    <property type="entry name" value="PDZ_sf"/>
</dbReference>
<dbReference type="PANTHER" id="PTHR23348:SF16">
    <property type="entry name" value="LEUCINE RICH REPEAT FAMILY PROTEIN"/>
    <property type="match status" value="1"/>
</dbReference>
<dbReference type="PANTHER" id="PTHR23348">
    <property type="entry name" value="PERIAXIN/AHNAK"/>
    <property type="match status" value="1"/>
</dbReference>
<dbReference type="Pfam" id="PF00595">
    <property type="entry name" value="PDZ"/>
    <property type="match status" value="1"/>
</dbReference>
<dbReference type="SMART" id="SM00228">
    <property type="entry name" value="PDZ"/>
    <property type="match status" value="1"/>
</dbReference>
<dbReference type="SUPFAM" id="SSF50156">
    <property type="entry name" value="PDZ domain-like"/>
    <property type="match status" value="1"/>
</dbReference>
<dbReference type="PROSITE" id="PS50106">
    <property type="entry name" value="PDZ"/>
    <property type="match status" value="1"/>
</dbReference>
<reference key="1">
    <citation type="journal article" date="1998" name="J. Biol. Chem.">
        <title>Two PDZ domain proteins encoded by the murine periaxin gene are the result of alternative intron retention and are differentially targeted in Schwann cells.</title>
        <authorList>
            <person name="Dytrych L."/>
            <person name="Sherman D.L."/>
            <person name="Gillespie C.S."/>
            <person name="Brophy P.J."/>
        </authorList>
    </citation>
    <scope>NUCLEOTIDE SEQUENCE [MRNA] (ISOFORMS 1 AND 2)</scope>
    <scope>SUBCELLULAR LOCATION</scope>
    <scope>TISSUE SPECIFICITY</scope>
</reference>
<reference key="2">
    <citation type="journal article" date="2000" name="J. Biol. Chem.">
        <title>A tripartite nuclear localization signal in the PDZ-domain protein L-periaxin.</title>
        <authorList>
            <person name="Sherman D.L."/>
            <person name="Brophy P.J."/>
        </authorList>
    </citation>
    <scope>SUBCELLULAR LOCATION</scope>
    <scope>TISSUE SPECIFICITY</scope>
</reference>
<reference key="3">
    <citation type="journal article" date="2000" name="Neuron">
        <title>Peripheral demyelination and neuropathic pain behavior in periaxin-deficient mice.</title>
        <authorList>
            <person name="Gillespie C.S."/>
            <person name="Sherman D.L."/>
            <person name="Fleetwood-Walker S.M."/>
            <person name="Cottrell D.F."/>
            <person name="Tait S."/>
            <person name="Garry E.M."/>
            <person name="Wallace V.C."/>
            <person name="Ure J."/>
            <person name="Griffiths I.R."/>
            <person name="Smith A."/>
            <person name="Brophy P.J."/>
        </authorList>
    </citation>
    <scope>DISRUPTION PHENOTYPE</scope>
    <scope>FUNCTION</scope>
    <scope>TISSUE SPECIFICITY</scope>
</reference>
<reference key="4">
    <citation type="journal article" date="2001" name="Neuron">
        <title>Specific disruption of a Schwann cell dystrophin-related protein complex in a demyelinating neuropathy.</title>
        <authorList>
            <person name="Sherman D.L."/>
            <person name="Fabrizi C."/>
            <person name="Gillespie C.S."/>
            <person name="Brophy P.J."/>
        </authorList>
    </citation>
    <scope>FUNCTION</scope>
    <scope>SUBCELLULAR LOCATION</scope>
    <scope>TISSUE SPECIFICITY</scope>
    <scope>IDENTIFICATION IN A COMPLEX WITH DRP2; DMD; DAG1 AND UTRN</scope>
</reference>
<reference key="5">
    <citation type="journal article" date="2004" name="Nature">
        <title>Restricted growth of Schwann cells lacking Cajal bands slows conduction in myelinated nerves.</title>
        <authorList>
            <person name="Court F.A."/>
            <person name="Sherman D.L."/>
            <person name="Pratt T."/>
            <person name="Garry E.M."/>
            <person name="Ribchester R.R."/>
            <person name="Cottrell D.F."/>
            <person name="Fleetwood-Walker S.M."/>
            <person name="Brophy P.J."/>
        </authorList>
    </citation>
    <scope>DISRUPTION PHENOTYPE</scope>
    <scope>FUNCTION</scope>
</reference>
<reference key="6">
    <citation type="journal article" date="2008" name="Glia">
        <title>Remodeling of motor nerve terminals in demyelinating axons of periaxin-null mice.</title>
        <authorList>
            <person name="Court F.A."/>
            <person name="Brophy P.J."/>
            <person name="Ribchester R.R."/>
        </authorList>
    </citation>
    <scope>DISRUPTION PHENOTYPE</scope>
    <scope>TISSUE SPECIFICITY</scope>
</reference>
<reference key="7">
    <citation type="journal article" date="2010" name="Cell">
        <title>A tissue-specific atlas of mouse protein phosphorylation and expression.</title>
        <authorList>
            <person name="Huttlin E.L."/>
            <person name="Jedrychowski M.P."/>
            <person name="Elias J.E."/>
            <person name="Goswami T."/>
            <person name="Rad R."/>
            <person name="Beausoleil S.A."/>
            <person name="Villen J."/>
            <person name="Haas W."/>
            <person name="Sowa M.E."/>
            <person name="Gygi S.P."/>
        </authorList>
    </citation>
    <scope>PHOSPHORYLATION [LARGE SCALE ANALYSIS] AT SER-979; SER-1279; SER-1283; SER-1285; SER-1293; SER-1337 AND SER-1369</scope>
    <scope>IDENTIFICATION BY MASS SPECTROMETRY [LARGE SCALE ANALYSIS]</scope>
    <source>
        <tissue>Brown adipose tissue</tissue>
        <tissue>Lung</tissue>
    </source>
</reference>
<reference key="8">
    <citation type="journal article" date="2011" name="Dev. Biol.">
        <title>Periaxin is required for hexagonal geometry and membrane organization of mature lens fibers.</title>
        <authorList>
            <person name="Maddala R."/>
            <person name="Skiba N.P."/>
            <person name="Lalane R. III"/>
            <person name="Sherman D.L."/>
            <person name="Brophy P.J."/>
            <person name="Rao P.V."/>
        </authorList>
    </citation>
    <scope>DISRUPTION PHENOTYPE</scope>
    <scope>FUNCTION</scope>
    <scope>TISSUE SPECIFICITY</scope>
    <scope>DEVELOPMENTAL STAGE</scope>
    <scope>SUBUNIT</scope>
    <scope>IDENTIFICATION IN A COMPLEX WITH EZR; AHNAK; BFSP1; BFSP2; ANK2; PLEC; VIM AND SPECTRIN</scope>
</reference>
<reference key="9">
    <citation type="journal article" date="2012" name="Curr. Biol.">
        <title>Increasing internodal distance in myelinated nerves accelerates nerve conduction to a flat maximum.</title>
        <authorList>
            <person name="Wu L.M."/>
            <person name="Williams A."/>
            <person name="Delaney A."/>
            <person name="Sherman D.L."/>
            <person name="Brophy P.J."/>
        </authorList>
    </citation>
    <scope>FUNCTION</scope>
    <scope>DOMAIN</scope>
</reference>
<reference key="10">
    <citation type="journal article" date="2012" name="J. Neurosci.">
        <title>Drp2 and periaxin form Cajal bands with dystroglycan but have distinct roles in Schwann cell growth.</title>
        <authorList>
            <person name="Sherman D.L."/>
            <person name="Wu L.M."/>
            <person name="Grove M."/>
            <person name="Gillespie C.S."/>
            <person name="Brophy P.J."/>
        </authorList>
    </citation>
    <scope>INTERACTION WITH DRP2</scope>
    <scope>FUNCTION</scope>
</reference>
<keyword id="KW-0025">Alternative splicing</keyword>
<keyword id="KW-0965">Cell junction</keyword>
<keyword id="KW-1003">Cell membrane</keyword>
<keyword id="KW-0963">Cytoplasm</keyword>
<keyword id="KW-0472">Membrane</keyword>
<keyword id="KW-0539">Nucleus</keyword>
<keyword id="KW-0597">Phosphoprotein</keyword>
<keyword id="KW-1185">Reference proteome</keyword>
<keyword id="KW-0677">Repeat</keyword>
<protein>
    <recommendedName>
        <fullName>Periaxin</fullName>
    </recommendedName>
</protein>
<evidence type="ECO:0000250" key="1">
    <source>
        <dbReference type="UniProtKB" id="E1BM58"/>
    </source>
</evidence>
<evidence type="ECO:0000250" key="2">
    <source>
        <dbReference type="UniProtKB" id="Q63425"/>
    </source>
</evidence>
<evidence type="ECO:0000250" key="3">
    <source>
        <dbReference type="UniProtKB" id="Q9BXM0"/>
    </source>
</evidence>
<evidence type="ECO:0000255" key="4">
    <source>
        <dbReference type="PROSITE-ProRule" id="PRU00143"/>
    </source>
</evidence>
<evidence type="ECO:0000256" key="5">
    <source>
        <dbReference type="SAM" id="MobiDB-lite"/>
    </source>
</evidence>
<evidence type="ECO:0000269" key="6">
    <source>
    </source>
</evidence>
<evidence type="ECO:0000269" key="7">
    <source>
    </source>
</evidence>
<evidence type="ECO:0000269" key="8">
    <source>
    </source>
</evidence>
<evidence type="ECO:0000269" key="9">
    <source>
    </source>
</evidence>
<evidence type="ECO:0000269" key="10">
    <source>
    </source>
</evidence>
<evidence type="ECO:0000269" key="11">
    <source>
    </source>
</evidence>
<evidence type="ECO:0000269" key="12">
    <source>
    </source>
</evidence>
<evidence type="ECO:0000269" key="13">
    <source>
    </source>
</evidence>
<evidence type="ECO:0000269" key="14">
    <source>
    </source>
</evidence>
<evidence type="ECO:0000303" key="15">
    <source>
    </source>
</evidence>
<evidence type="ECO:0000305" key="16"/>
<evidence type="ECO:0007744" key="17">
    <source>
    </source>
</evidence>
<proteinExistence type="evidence at protein level"/>
<gene>
    <name type="primary">Prx</name>
</gene>
<comment type="function">
    <text evidence="7 8 9 12 13">Scaffolding protein that functions as part of a dystroglycan complex in Schwann cells, and as part of EZR and AHNAK-containing complexes in eye lens fiber cells (PubMed:11430802, PubMed:21745462, PubMed:22764250). Required for the maintenance of the peripheral myelin sheath that is essential for normal transmission of nerve impulses and normal perception of sensory stimuli (PubMed:10839370). Required for normal transport of MBP mRNA from the perinuclear to the paranodal regions (PubMed:15356632). Required for normal remyelination after nerve injury (PubMed:10839370). Required for normal elongation of Schwann cells and normal length of the internodes between the nodes of Ranvier. The demyelinated nodes of Ranvier permit saltatory transmission of nerve impulses; shorter internodes cause slower transmission of nerve impulses (PubMed:15356632, PubMed:23022068). Required for the formation of appositions between the abaxonal surface of the myelin sheath and the Schwann cell plasma membrane; the Schwann cell cytoplasm is restricted to regions between these appositions (PubMed:15356632, PubMed:23022068). Required for the formation of Cajal bands and of Schmidt-Lanterman incisures that correspond to short, cytoplasm-filled regions on myelinated nerves (PubMed:22764250, PubMed:23022068). Recruits DRP2 to the Schwann cell plasma membrane (PubMed:11430802, PubMed:22764250, PubMed:23022068). Required for normal protein composition of the eye lens fiber cell plasma membrane and normal eye lens fiber cell morphology (PubMed:21745462).</text>
</comment>
<comment type="subunit">
    <text evidence="1 2 3 8 11 12">Homodimer (via PDZ domain) (By similarity). Interacts with SCN10A. Found in a complex with SCN10A (By similarity). Interacts with DRP2 (PubMed:22764250). Identified in a dystroglycan complex that contains at least PRX, DRP2, UTRN, DMD and DAG1 (PubMed:11430802). Detected in a complex composed of at least EZR, AHNAK, PPL and PRX (By similarity). Identified in a complex with EZR, AHNAK, BFSP1, BFSP2, ANK2, PLEC, VIM and spectrin (PubMed:21745462).</text>
</comment>
<comment type="subcellular location">
    <subcellularLocation>
        <location evidence="11">Cell membrane</location>
    </subcellularLocation>
    <subcellularLocation>
        <location evidence="11">Cell junction</location>
    </subcellularLocation>
    <text evidence="11">Colocalizes with ACTB at tricellular junctions between eye lens fiber cells.</text>
</comment>
<comment type="subcellular location">
    <molecule>Isoform 1</molecule>
    <subcellularLocation>
        <location evidence="14">Cell membrane</location>
        <topology evidence="16">Peripheral membrane protein</topology>
        <orientation evidence="16">Cytoplasmic side</orientation>
    </subcellularLocation>
    <subcellularLocation>
        <location evidence="6">Nucleus</location>
    </subcellularLocation>
    <subcellularLocation>
        <location evidence="3">Cytoplasm</location>
    </subcellularLocation>
    <text evidence="6 14">Detected in the Schwann cell nucleus prior to the onset of myelination (PubMed:10671475). Detected in Schwann cells at periaxonal myelin membranes. Associated with the cell membrane during myelination (PubMed:9488714).</text>
</comment>
<comment type="subcellular location">
    <molecule>Isoform 2</molecule>
    <subcellularLocation>
        <location evidence="6 14">Cytoplasm</location>
    </subcellularLocation>
</comment>
<comment type="alternative products">
    <event type="alternative splicing"/>
    <isoform>
        <id>O55103-1</id>
        <name>1</name>
        <name>L-periaxin</name>
        <sequence type="displayed"/>
    </isoform>
    <isoform>
        <id>O55103-2</id>
        <name>2</name>
        <name>S-periaxin</name>
        <sequence type="described" ref="VSP_004366 VSP_004367"/>
    </isoform>
</comment>
<comment type="tissue specificity">
    <text evidence="6 7 8 10 11 14">Detected in myelinating Schwann cells in intramuscular nerves in triangularis sterni (PubMed:18205176). Detected in sciatic nerve (PubMed:11430802). Detected in eye lens fiber cells (PubMed:21745462). Isoform 1 is detected in myelinating Schwann cells in sciatic nerve (PubMed:10671475, PubMed:10839370, PubMed:9488714). Isoform 2 is detected in myelinating Schwann cells in sciatic nerve (at protein level) (PubMed:10839370, PubMed:9488714). Detected in sciatic nerve (PubMed:10839370, PubMed:9488714).</text>
</comment>
<comment type="developmental stage">
    <text evidence="11">Detected in embryonic eye lens; levels increase steadily from 10.5 dpc onto birth and continue to increase during the first three weeks after birth.</text>
</comment>
<comment type="domain">
    <text evidence="16">Has a remarkable domain of repetitive pentameric units sometimes followed by a tripeptide spacer, it may separate two functional basic and acidic domains.</text>
</comment>
<comment type="domain">
    <text evidence="3 13">The PDZ domain contains the signal for export from the nucleus (By similarity). The N-terminal region including the PDZ domain is required for the formation of Cajal bands on myelinated nerves.</text>
</comment>
<comment type="domain">
    <text evidence="2">The Arg/Lys-rich basic domain functions as a tripartite nuclear localization signal.</text>
</comment>
<comment type="disruption phenotype">
    <text evidence="7 9 10 11">Mice are born at the expected Mendelian rate and appear grossly normal during the first six weeks of life. After six to nine months, they display pronounced unsteadiness of gait and difficulty in supporting themselves on their hindlimbs, weight loss due to an inability to feed and labored respiration (PubMed:10839370). Their sensory, motor and vagus nerves show extensive demyelination with demyelinated segments surrounded by focal thickenings (PubMed:10839370, PubMed:18205176). In contrast, the predominantly sensory saphenous nerves are extensively hypermyelinated, resulting in myelin sheath infolding and axon compression (PubMed:10839370). At eight months, naked or thinly myelinated axons are common in sciatic nerve fibers (PubMed:10839370). Already at six weeks, mutant mice display markedly increased sensitivity to noxious mechanical and thermal stimuli (PubMed:10839370). Besides, four month old mutant mice display impaired remyelination after crush injury (PubMed:10839370). Schwann cells from mutant mice display a reduced rate of elongation, leading to decreased distances between nodes of Ranvier and reduced velocity of the transmission of nerve impulses; this results in impaired motor skills on the RotaRod in three week old mice (PubMed:15356632). Peripheral nerves show decreased conduction velocity, due to defects in the myelin sheath (PubMed:10839370). Motor axons from five month old mice show an increased number of preterminal branches that arise from demyelinated regions close to the neuromuscular junction (PubMed:18205176). In contrast, axon branching close to the neuromuscular junction appears normal in three week old mice (PubMed:18205176). At the molecular level, gene disruption impairs formation of Cajal bands and location of Drp2 in patches that colocalize with appositions between the abaxonal surface of the myelin sheath and the Schwann cell plasma membrane (PubMed:15356632). Cytoplasm from mutant Schwann cells forms a concentric ring under the cell membrane, instead of being strictly compartmentalized at Cajal bands (PubMed:15356632). The transport of the mRNA coding for Mbp is impaired; the mRNA level is highest in the perinuclear region and does not accumulate in the paranodal region (PubMed:15356632). Eye lenses from 90 day old mutant mice appear grossly normal at the macroscopic level, but display altered shape and organization of inner lens fiber cells, together with alteration in the membrane localization of Mip, Ezr and Ahnak (PubMed:21745462).</text>
</comment>
<comment type="similarity">
    <text evidence="16">Belongs to the periaxin family.</text>
</comment>
<feature type="chain" id="PRO_0000058564" description="Periaxin">
    <location>
        <begin position="1"/>
        <end position="1391"/>
    </location>
</feature>
<feature type="domain" description="PDZ" evidence="4">
    <location>
        <begin position="16"/>
        <end position="99"/>
    </location>
</feature>
<feature type="repeat" description="1">
    <location>
        <begin position="432"/>
        <end position="436"/>
    </location>
</feature>
<feature type="repeat" description="2">
    <location>
        <begin position="440"/>
        <end position="444"/>
    </location>
</feature>
<feature type="repeat" description="3">
    <location>
        <begin position="448"/>
        <end position="452"/>
    </location>
</feature>
<feature type="repeat" description="4">
    <location>
        <begin position="456"/>
        <end position="460"/>
    </location>
</feature>
<feature type="repeat" description="5">
    <location>
        <begin position="464"/>
        <end position="468"/>
    </location>
</feature>
<feature type="repeat" description="6">
    <location>
        <begin position="469"/>
        <end position="473"/>
    </location>
</feature>
<feature type="repeat" description="7">
    <location>
        <begin position="474"/>
        <end position="478"/>
    </location>
</feature>
<feature type="repeat" description="8">
    <location>
        <begin position="482"/>
        <end position="486"/>
    </location>
</feature>
<feature type="repeat" description="9">
    <location>
        <begin position="487"/>
        <end position="491"/>
    </location>
</feature>
<feature type="repeat" description="10">
    <location>
        <begin position="495"/>
        <end position="499"/>
    </location>
</feature>
<feature type="repeat" description="11">
    <location>
        <begin position="500"/>
        <end position="504"/>
    </location>
</feature>
<feature type="repeat" description="12">
    <location>
        <begin position="508"/>
        <end position="512"/>
    </location>
</feature>
<feature type="repeat" description="13; approximate">
    <location>
        <begin position="513"/>
        <end position="517"/>
    </location>
</feature>
<feature type="repeat" description="14">
    <location>
        <begin position="521"/>
        <end position="525"/>
    </location>
</feature>
<feature type="repeat" description="15">
    <location>
        <begin position="526"/>
        <end position="530"/>
    </location>
</feature>
<feature type="repeat" description="16">
    <location>
        <begin position="534"/>
        <end position="538"/>
    </location>
</feature>
<feature type="repeat" description="17">
    <location>
        <begin position="539"/>
        <end position="543"/>
    </location>
</feature>
<feature type="repeat" description="18">
    <location>
        <begin position="547"/>
        <end position="551"/>
    </location>
</feature>
<feature type="repeat" description="19">
    <location>
        <begin position="552"/>
        <end position="556"/>
    </location>
</feature>
<feature type="repeat" description="20">
    <location>
        <begin position="560"/>
        <end position="564"/>
    </location>
</feature>
<feature type="repeat" description="21">
    <location>
        <begin position="565"/>
        <end position="569"/>
    </location>
</feature>
<feature type="repeat" description="22">
    <location>
        <begin position="573"/>
        <end position="577"/>
    </location>
</feature>
<feature type="repeat" description="23">
    <location>
        <begin position="578"/>
        <end position="582"/>
    </location>
</feature>
<feature type="repeat" description="24">
    <location>
        <begin position="583"/>
        <end position="587"/>
    </location>
</feature>
<feature type="repeat" description="25">
    <location>
        <begin position="591"/>
        <end position="595"/>
    </location>
</feature>
<feature type="repeat" description="26">
    <location>
        <begin position="596"/>
        <end position="600"/>
    </location>
</feature>
<feature type="repeat" description="27">
    <location>
        <begin position="601"/>
        <end position="605"/>
    </location>
</feature>
<feature type="repeat" description="28">
    <location>
        <begin position="609"/>
        <end position="613"/>
    </location>
</feature>
<feature type="repeat" description="29">
    <location>
        <begin position="614"/>
        <end position="618"/>
    </location>
</feature>
<feature type="repeat" description="30">
    <location>
        <begin position="619"/>
        <end position="623"/>
    </location>
</feature>
<feature type="repeat" description="31">
    <location>
        <begin position="627"/>
        <end position="631"/>
    </location>
</feature>
<feature type="repeat" description="32">
    <location>
        <begin position="632"/>
        <end position="636"/>
    </location>
</feature>
<feature type="repeat" description="33">
    <location>
        <begin position="637"/>
        <end position="641"/>
    </location>
</feature>
<feature type="repeat" description="34">
    <location>
        <begin position="645"/>
        <end position="649"/>
    </location>
</feature>
<feature type="repeat" description="35">
    <location>
        <begin position="650"/>
        <end position="654"/>
    </location>
</feature>
<feature type="repeat" description="36">
    <location>
        <begin position="655"/>
        <end position="659"/>
    </location>
</feature>
<feature type="repeat" description="37">
    <location>
        <begin position="663"/>
        <end position="667"/>
    </location>
</feature>
<feature type="repeat" description="38">
    <location>
        <begin position="671"/>
        <end position="675"/>
    </location>
</feature>
<feature type="repeat" description="39">
    <location>
        <begin position="676"/>
        <end position="680"/>
    </location>
</feature>
<feature type="repeat" description="40">
    <location>
        <begin position="684"/>
        <end position="688"/>
    </location>
</feature>
<feature type="repeat" description="41">
    <location>
        <begin position="689"/>
        <end position="693"/>
    </location>
</feature>
<feature type="repeat" description="42">
    <location>
        <begin position="697"/>
        <end position="701"/>
    </location>
</feature>
<feature type="repeat" description="43">
    <location>
        <begin position="702"/>
        <end position="706"/>
    </location>
</feature>
<feature type="repeat" description="44">
    <location>
        <begin position="707"/>
        <end position="711"/>
    </location>
</feature>
<feature type="repeat" description="45">
    <location>
        <begin position="715"/>
        <end position="719"/>
    </location>
</feature>
<feature type="region of interest" description="45 X 5 AA approximate tandem repeats of [LVMGIED]-[PQSKHARMI]-[EDKLVTR]-[LIVMAP]-[AQKHRPEVSD]; that may have a tripeptide spacer of [LVIDEA]-[PMSVI]-[KEATDQ]">
    <location>
        <begin position="432"/>
        <end position="719"/>
    </location>
</feature>
<feature type="region of interest" description="Disordered" evidence="5">
    <location>
        <begin position="1267"/>
        <end position="1366"/>
    </location>
</feature>
<feature type="short sequence motif" description="Nuclear export signal" evidence="3">
    <location>
        <begin position="70"/>
        <end position="84"/>
    </location>
</feature>
<feature type="short sequence motif" description="Nuclear localization signal">
    <location>
        <begin position="118"/>
        <end position="196"/>
    </location>
</feature>
<feature type="compositionally biased region" description="Low complexity" evidence="5">
    <location>
        <begin position="1275"/>
        <end position="1285"/>
    </location>
</feature>
<feature type="compositionally biased region" description="Basic and acidic residues" evidence="5">
    <location>
        <begin position="1354"/>
        <end position="1363"/>
    </location>
</feature>
<feature type="modified residue" description="Phosphoserine" evidence="2">
    <location>
        <position position="7"/>
    </location>
</feature>
<feature type="modified residue" description="Phosphoserine" evidence="2">
    <location>
        <position position="243"/>
    </location>
</feature>
<feature type="modified residue" description="Phosphoserine" evidence="2">
    <location>
        <position position="848"/>
    </location>
</feature>
<feature type="modified residue" description="Phosphoserine" evidence="17">
    <location>
        <position position="979"/>
    </location>
</feature>
<feature type="modified residue" description="Phosphoserine" evidence="2">
    <location>
        <position position="1028"/>
    </location>
</feature>
<feature type="modified residue" description="Phosphoserine" evidence="17">
    <location>
        <position position="1279"/>
    </location>
</feature>
<feature type="modified residue" description="Phosphoserine" evidence="17">
    <location>
        <position position="1283"/>
    </location>
</feature>
<feature type="modified residue" description="Phosphoserine" evidence="17">
    <location>
        <position position="1285"/>
    </location>
</feature>
<feature type="modified residue" description="Phosphoserine" evidence="17">
    <location>
        <position position="1293"/>
    </location>
</feature>
<feature type="modified residue" description="Phosphoserine" evidence="2">
    <location>
        <position position="1331"/>
    </location>
</feature>
<feature type="modified residue" description="Phosphoserine" evidence="17">
    <location>
        <position position="1337"/>
    </location>
</feature>
<feature type="modified residue" description="Phosphoserine" evidence="17">
    <location>
        <position position="1369"/>
    </location>
</feature>
<feature type="splice variant" id="VSP_004366" description="In isoform 2." evidence="15">
    <original>NIQSLAPVKKKKMVTGALGTP</original>
    <variation>VRVLSPVPVQDSPSDRVAAAP</variation>
    <location>
        <begin position="128"/>
        <end position="148"/>
    </location>
</feature>
<feature type="splice variant" id="VSP_004367" description="In isoform 2." evidence="15">
    <location>
        <begin position="149"/>
        <end position="1391"/>
    </location>
</feature>